<dbReference type="EC" id="7.1.1.-" evidence="1"/>
<dbReference type="EMBL" id="CP000613">
    <property type="protein sequence ID" value="ACI98649.1"/>
    <property type="molecule type" value="Genomic_DNA"/>
</dbReference>
<dbReference type="RefSeq" id="WP_012566437.1">
    <property type="nucleotide sequence ID" value="NC_011420.2"/>
</dbReference>
<dbReference type="SMR" id="B6ISX8"/>
<dbReference type="STRING" id="414684.RC1_1237"/>
<dbReference type="KEGG" id="rce:RC1_1237"/>
<dbReference type="eggNOG" id="COG0649">
    <property type="taxonomic scope" value="Bacteria"/>
</dbReference>
<dbReference type="HOGENOM" id="CLU_015134_1_1_5"/>
<dbReference type="OrthoDB" id="9801496at2"/>
<dbReference type="Proteomes" id="UP000001591">
    <property type="component" value="Chromosome"/>
</dbReference>
<dbReference type="GO" id="GO:0005886">
    <property type="term" value="C:plasma membrane"/>
    <property type="evidence" value="ECO:0007669"/>
    <property type="project" value="UniProtKB-SubCell"/>
</dbReference>
<dbReference type="GO" id="GO:0051287">
    <property type="term" value="F:NAD binding"/>
    <property type="evidence" value="ECO:0007669"/>
    <property type="project" value="InterPro"/>
</dbReference>
<dbReference type="GO" id="GO:0050136">
    <property type="term" value="F:NADH:ubiquinone reductase (non-electrogenic) activity"/>
    <property type="evidence" value="ECO:0007669"/>
    <property type="project" value="UniProtKB-UniRule"/>
</dbReference>
<dbReference type="GO" id="GO:0048038">
    <property type="term" value="F:quinone binding"/>
    <property type="evidence" value="ECO:0007669"/>
    <property type="project" value="UniProtKB-KW"/>
</dbReference>
<dbReference type="FunFam" id="1.10.645.10:FF:000005">
    <property type="entry name" value="NADH-quinone oxidoreductase subunit D"/>
    <property type="match status" value="1"/>
</dbReference>
<dbReference type="Gene3D" id="1.10.645.10">
    <property type="entry name" value="Cytochrome-c3 Hydrogenase, chain B"/>
    <property type="match status" value="1"/>
</dbReference>
<dbReference type="HAMAP" id="MF_01358">
    <property type="entry name" value="NDH1_NuoD"/>
    <property type="match status" value="1"/>
</dbReference>
<dbReference type="InterPro" id="IPR001135">
    <property type="entry name" value="NADH_Q_OxRdtase_suD"/>
</dbReference>
<dbReference type="InterPro" id="IPR014029">
    <property type="entry name" value="NADH_UbQ_OxRdtase_49kDa_CS"/>
</dbReference>
<dbReference type="InterPro" id="IPR022885">
    <property type="entry name" value="NDH1_su_D/H"/>
</dbReference>
<dbReference type="InterPro" id="IPR029014">
    <property type="entry name" value="NiFe-Hase_large"/>
</dbReference>
<dbReference type="NCBIfam" id="TIGR01962">
    <property type="entry name" value="NuoD"/>
    <property type="match status" value="1"/>
</dbReference>
<dbReference type="NCBIfam" id="NF004739">
    <property type="entry name" value="PRK06075.1"/>
    <property type="match status" value="1"/>
</dbReference>
<dbReference type="PANTHER" id="PTHR11993:SF10">
    <property type="entry name" value="NADH DEHYDROGENASE [UBIQUINONE] IRON-SULFUR PROTEIN 2, MITOCHONDRIAL"/>
    <property type="match status" value="1"/>
</dbReference>
<dbReference type="PANTHER" id="PTHR11993">
    <property type="entry name" value="NADH-UBIQUINONE OXIDOREDUCTASE 49 KDA SUBUNIT"/>
    <property type="match status" value="1"/>
</dbReference>
<dbReference type="Pfam" id="PF00346">
    <property type="entry name" value="Complex1_49kDa"/>
    <property type="match status" value="1"/>
</dbReference>
<dbReference type="SUPFAM" id="SSF56762">
    <property type="entry name" value="HydB/Nqo4-like"/>
    <property type="match status" value="1"/>
</dbReference>
<dbReference type="PROSITE" id="PS00535">
    <property type="entry name" value="COMPLEX1_49K"/>
    <property type="match status" value="1"/>
</dbReference>
<proteinExistence type="inferred from homology"/>
<comment type="function">
    <text evidence="1">NDH-1 shuttles electrons from NADH, via FMN and iron-sulfur (Fe-S) centers, to quinones in the respiratory chain. The immediate electron acceptor for the enzyme in this species is believed to be ubiquinone. Couples the redox reaction to proton translocation (for every two electrons transferred, four hydrogen ions are translocated across the cytoplasmic membrane), and thus conserves the redox energy in a proton gradient.</text>
</comment>
<comment type="catalytic activity">
    <reaction evidence="1">
        <text>a quinone + NADH + 5 H(+)(in) = a quinol + NAD(+) + 4 H(+)(out)</text>
        <dbReference type="Rhea" id="RHEA:57888"/>
        <dbReference type="ChEBI" id="CHEBI:15378"/>
        <dbReference type="ChEBI" id="CHEBI:24646"/>
        <dbReference type="ChEBI" id="CHEBI:57540"/>
        <dbReference type="ChEBI" id="CHEBI:57945"/>
        <dbReference type="ChEBI" id="CHEBI:132124"/>
    </reaction>
</comment>
<comment type="subunit">
    <text evidence="1">NDH-1 is composed of 14 different subunits. Subunits NuoB, C, D, E, F, and G constitute the peripheral sector of the complex.</text>
</comment>
<comment type="subcellular location">
    <subcellularLocation>
        <location evidence="1">Cell inner membrane</location>
        <topology evidence="1">Peripheral membrane protein</topology>
        <orientation evidence="1">Cytoplasmic side</orientation>
    </subcellularLocation>
</comment>
<comment type="similarity">
    <text evidence="1">Belongs to the complex I 49 kDa subunit family.</text>
</comment>
<keyword id="KW-0997">Cell inner membrane</keyword>
<keyword id="KW-1003">Cell membrane</keyword>
<keyword id="KW-0472">Membrane</keyword>
<keyword id="KW-0520">NAD</keyword>
<keyword id="KW-0874">Quinone</keyword>
<keyword id="KW-1185">Reference proteome</keyword>
<keyword id="KW-1278">Translocase</keyword>
<keyword id="KW-0813">Transport</keyword>
<keyword id="KW-0830">Ubiquinone</keyword>
<protein>
    <recommendedName>
        <fullName evidence="1">NADH-quinone oxidoreductase subunit D</fullName>
        <ecNumber evidence="1">7.1.1.-</ecNumber>
    </recommendedName>
    <alternativeName>
        <fullName evidence="1">NADH dehydrogenase I subunit D</fullName>
    </alternativeName>
    <alternativeName>
        <fullName evidence="1">NDH-1 subunit D</fullName>
    </alternativeName>
</protein>
<feature type="chain" id="PRO_0000371922" description="NADH-quinone oxidoreductase subunit D">
    <location>
        <begin position="1"/>
        <end position="398"/>
    </location>
</feature>
<reference key="1">
    <citation type="submission" date="2007-03" db="EMBL/GenBank/DDBJ databases">
        <title>Genome sequence of Rhodospirillum centenum.</title>
        <authorList>
            <person name="Touchman J.W."/>
            <person name="Bauer C."/>
            <person name="Blankenship R.E."/>
        </authorList>
    </citation>
    <scope>NUCLEOTIDE SEQUENCE [LARGE SCALE GENOMIC DNA]</scope>
    <source>
        <strain>ATCC 51521 / SW</strain>
    </source>
</reference>
<evidence type="ECO:0000255" key="1">
    <source>
        <dbReference type="HAMAP-Rule" id="MF_01358"/>
    </source>
</evidence>
<name>NUOD_RHOCS</name>
<accession>B6ISX8</accession>
<gene>
    <name evidence="1" type="primary">nuoD</name>
    <name type="ordered locus">RC1_1237</name>
</gene>
<organism>
    <name type="scientific">Rhodospirillum centenum (strain ATCC 51521 / SW)</name>
    <dbReference type="NCBI Taxonomy" id="414684"/>
    <lineage>
        <taxon>Bacteria</taxon>
        <taxon>Pseudomonadati</taxon>
        <taxon>Pseudomonadota</taxon>
        <taxon>Alphaproteobacteria</taxon>
        <taxon>Rhodospirillales</taxon>
        <taxon>Rhodospirillaceae</taxon>
        <taxon>Rhodospirillum</taxon>
    </lineage>
</organism>
<sequence>MGNNVAETQIKPFTMNFGPQHPAAHGVLRLVLEMDGEVVQRADPHVGLLHRGTEKLIEYKTYIQALPYFDRLDYVSPMSQEHAFALATEKLLGITVPVRGQYIRVLFSEITRILNHLLNITTFGLDVGAITPSLWGFEEREKLMAFYERVSGARMHANYFRPGGVNLDMPAGLADDIWEYTERFPKFVADLNNLLTENRIFKQRTVDIGVVSRADALAWGFSGPMIRGSGVPWDLRKAQPYDRYDEFDFDIPVGSTGDCYARYLVRMEEMRQSNRLIRQALEKLAKTPGPVKVNDRKIAPPPRGEMKRSMESLIHHFKLYTEGYHVPAGETYTAVESPKGEFGVYLVSDGTNRPYRCKIRPTGFSHLQAMDFMSKGHMLADTVAIIGSMDIVFGEIDR</sequence>